<feature type="chain" id="PRO_0000349280" description="Calpain-8">
    <location>
        <begin position="1"/>
        <end position="703"/>
    </location>
</feature>
<feature type="domain" description="Calpain catalytic" evidence="2">
    <location>
        <begin position="45"/>
        <end position="344"/>
    </location>
</feature>
<feature type="domain" description="EF-hand 1" evidence="3">
    <location>
        <begin position="575"/>
        <end position="610"/>
    </location>
</feature>
<feature type="domain" description="EF-hand 2" evidence="3">
    <location>
        <begin position="618"/>
        <end position="640"/>
    </location>
</feature>
<feature type="domain" description="EF-hand 3" evidence="3">
    <location>
        <begin position="670"/>
        <end position="703"/>
    </location>
</feature>
<feature type="region of interest" description="Domain III">
    <location>
        <begin position="356"/>
        <end position="379"/>
    </location>
</feature>
<feature type="active site" evidence="1">
    <location>
        <position position="105"/>
    </location>
</feature>
<feature type="active site" evidence="1">
    <location>
        <position position="262"/>
    </location>
</feature>
<feature type="active site" evidence="1">
    <location>
        <position position="286"/>
    </location>
</feature>
<feature type="binding site" evidence="3">
    <location>
        <position position="588"/>
    </location>
    <ligand>
        <name>Ca(2+)</name>
        <dbReference type="ChEBI" id="CHEBI:29108"/>
        <label>1</label>
    </ligand>
</feature>
<feature type="binding site" evidence="3">
    <location>
        <position position="590"/>
    </location>
    <ligand>
        <name>Ca(2+)</name>
        <dbReference type="ChEBI" id="CHEBI:29108"/>
        <label>1</label>
    </ligand>
</feature>
<feature type="binding site" evidence="3">
    <location>
        <position position="592"/>
    </location>
    <ligand>
        <name>Ca(2+)</name>
        <dbReference type="ChEBI" id="CHEBI:29108"/>
        <label>1</label>
    </ligand>
</feature>
<feature type="binding site" evidence="3">
    <location>
        <position position="594"/>
    </location>
    <ligand>
        <name>Ca(2+)</name>
        <dbReference type="ChEBI" id="CHEBI:29108"/>
        <label>1</label>
    </ligand>
</feature>
<feature type="binding site" evidence="3">
    <location>
        <position position="599"/>
    </location>
    <ligand>
        <name>Ca(2+)</name>
        <dbReference type="ChEBI" id="CHEBI:29108"/>
        <label>1</label>
    </ligand>
</feature>
<feature type="binding site" evidence="3">
    <location>
        <position position="618"/>
    </location>
    <ligand>
        <name>Ca(2+)</name>
        <dbReference type="ChEBI" id="CHEBI:29108"/>
        <label>2</label>
    </ligand>
</feature>
<feature type="binding site" evidence="3">
    <location>
        <position position="620"/>
    </location>
    <ligand>
        <name>Ca(2+)</name>
        <dbReference type="ChEBI" id="CHEBI:29108"/>
        <label>2</label>
    </ligand>
</feature>
<feature type="binding site" evidence="3">
    <location>
        <position position="622"/>
    </location>
    <ligand>
        <name>Ca(2+)</name>
        <dbReference type="ChEBI" id="CHEBI:29108"/>
        <label>2</label>
    </ligand>
</feature>
<feature type="binding site" evidence="3">
    <location>
        <position position="624"/>
    </location>
    <ligand>
        <name>Ca(2+)</name>
        <dbReference type="ChEBI" id="CHEBI:29108"/>
        <label>2</label>
    </ligand>
</feature>
<feature type="binding site" evidence="3">
    <location>
        <position position="629"/>
    </location>
    <ligand>
        <name>Ca(2+)</name>
        <dbReference type="ChEBI" id="CHEBI:29108"/>
        <label>2</label>
    </ligand>
</feature>
<feature type="sequence conflict" description="In Ref. 3; AAI57894." evidence="4" ref="3">
    <original>S</original>
    <variation>Y</variation>
    <location>
        <position position="245"/>
    </location>
</feature>
<feature type="sequence conflict" description="In Ref. 3; AAI57894." evidence="4" ref="3">
    <original>T</original>
    <variation>M</variation>
    <location>
        <position position="592"/>
    </location>
</feature>
<feature type="helix" evidence="5">
    <location>
        <begin position="27"/>
        <end position="29"/>
    </location>
</feature>
<feature type="helix" evidence="5">
    <location>
        <begin position="32"/>
        <end position="42"/>
    </location>
</feature>
<feature type="helix" evidence="5">
    <location>
        <begin position="55"/>
        <end position="58"/>
    </location>
</feature>
<feature type="turn" evidence="5">
    <location>
        <begin position="69"/>
        <end position="72"/>
    </location>
</feature>
<feature type="strand" evidence="5">
    <location>
        <begin position="74"/>
        <end position="76"/>
    </location>
</feature>
<feature type="helix" evidence="5">
    <location>
        <begin position="78"/>
        <end position="81"/>
    </location>
</feature>
<feature type="helix" evidence="5">
    <location>
        <begin position="94"/>
        <end position="96"/>
    </location>
</feature>
<feature type="helix" evidence="5">
    <location>
        <begin position="105"/>
        <end position="114"/>
    </location>
</feature>
<feature type="helix" evidence="5">
    <location>
        <begin position="118"/>
        <end position="124"/>
    </location>
</feature>
<feature type="strand" evidence="5">
    <location>
        <begin position="136"/>
        <end position="145"/>
    </location>
</feature>
<feature type="strand" evidence="5">
    <location>
        <begin position="148"/>
        <end position="155"/>
    </location>
</feature>
<feature type="strand" evidence="5">
    <location>
        <begin position="158"/>
        <end position="161"/>
    </location>
</feature>
<feature type="strand" evidence="5">
    <location>
        <begin position="164"/>
        <end position="167"/>
    </location>
</feature>
<feature type="helix" evidence="5">
    <location>
        <begin position="177"/>
        <end position="188"/>
    </location>
</feature>
<feature type="strand" evidence="5">
    <location>
        <begin position="190"/>
        <end position="192"/>
    </location>
</feature>
<feature type="helix" evidence="5">
    <location>
        <begin position="193"/>
        <end position="195"/>
    </location>
</feature>
<feature type="helix" evidence="5">
    <location>
        <begin position="207"/>
        <end position="209"/>
    </location>
</feature>
<feature type="strand" evidence="5">
    <location>
        <begin position="213"/>
        <end position="216"/>
    </location>
</feature>
<feature type="helix" evidence="5">
    <location>
        <begin position="224"/>
        <end position="234"/>
    </location>
</feature>
<feature type="strand" evidence="5">
    <location>
        <begin position="237"/>
        <end position="241"/>
    </location>
</feature>
<feature type="helix" evidence="5">
    <location>
        <begin position="247"/>
        <end position="249"/>
    </location>
</feature>
<feature type="strand" evidence="5">
    <location>
        <begin position="259"/>
        <end position="261"/>
    </location>
</feature>
<feature type="strand" evidence="5">
    <location>
        <begin position="264"/>
        <end position="274"/>
    </location>
</feature>
<feature type="strand" evidence="5">
    <location>
        <begin position="277"/>
        <end position="285"/>
    </location>
</feature>
<feature type="helix" evidence="5">
    <location>
        <begin position="302"/>
        <end position="306"/>
    </location>
</feature>
<feature type="helix" evidence="5">
    <location>
        <begin position="309"/>
        <end position="315"/>
    </location>
</feature>
<feature type="strand" evidence="5">
    <location>
        <begin position="321"/>
        <end position="327"/>
    </location>
</feature>
<feature type="helix" evidence="5">
    <location>
        <begin position="328"/>
        <end position="334"/>
    </location>
</feature>
<feature type="strand" evidence="5">
    <location>
        <begin position="337"/>
        <end position="341"/>
    </location>
</feature>
<dbReference type="EC" id="3.4.22.53"/>
<dbReference type="EMBL" id="AC099065">
    <property type="status" value="NOT_ANNOTATED_CDS"/>
    <property type="molecule type" value="Genomic_DNA"/>
</dbReference>
<dbReference type="EMBL" id="CR628412">
    <property type="status" value="NOT_ANNOTATED_CDS"/>
    <property type="molecule type" value="Genomic_DNA"/>
</dbReference>
<dbReference type="EMBL" id="CR848842">
    <property type="status" value="NOT_ANNOTATED_CDS"/>
    <property type="molecule type" value="Genomic_DNA"/>
</dbReference>
<dbReference type="EMBL" id="BC157893">
    <property type="protein sequence ID" value="AAI57894.1"/>
    <property type="molecule type" value="mRNA"/>
</dbReference>
<dbReference type="CCDS" id="CCDS73038.1"/>
<dbReference type="RefSeq" id="NP_001137434.1">
    <property type="nucleotide sequence ID" value="NM_001143962.2"/>
</dbReference>
<dbReference type="PDB" id="2NQA">
    <property type="method" value="X-ray"/>
    <property type="resolution" value="2.20 A"/>
    <property type="chains" value="A/B=23-346"/>
</dbReference>
<dbReference type="PDBsum" id="2NQA"/>
<dbReference type="SMR" id="A6NHC0"/>
<dbReference type="BioGRID" id="132835">
    <property type="interactions" value="11"/>
</dbReference>
<dbReference type="FunCoup" id="A6NHC0">
    <property type="interactions" value="426"/>
</dbReference>
<dbReference type="IntAct" id="A6NHC0">
    <property type="interactions" value="5"/>
</dbReference>
<dbReference type="STRING" id="9606.ENSP00000355837"/>
<dbReference type="MEROPS" id="C02.007"/>
<dbReference type="GlyGen" id="A6NHC0">
    <property type="glycosylation" value="1 site, 1 O-linked glycan (1 site)"/>
</dbReference>
<dbReference type="iPTMnet" id="A6NHC0"/>
<dbReference type="PhosphoSitePlus" id="A6NHC0"/>
<dbReference type="BioMuta" id="CAPN8"/>
<dbReference type="jPOST" id="A6NHC0"/>
<dbReference type="MassIVE" id="A6NHC0"/>
<dbReference type="PaxDb" id="9606-ENSP00000355837"/>
<dbReference type="PeptideAtlas" id="A6NHC0"/>
<dbReference type="ProteomicsDB" id="1188"/>
<dbReference type="Antibodypedia" id="61692">
    <property type="antibodies" value="67 antibodies from 15 providers"/>
</dbReference>
<dbReference type="DNASU" id="388743"/>
<dbReference type="Ensembl" id="ENST00000366872.10">
    <property type="protein sequence ID" value="ENSP00000355837.6"/>
    <property type="gene ID" value="ENSG00000203697.12"/>
</dbReference>
<dbReference type="GeneID" id="388743"/>
<dbReference type="KEGG" id="hsa:388743"/>
<dbReference type="MANE-Select" id="ENST00000366872.10">
    <property type="protein sequence ID" value="ENSP00000355837.6"/>
    <property type="RefSeq nucleotide sequence ID" value="NM_001143962.2"/>
    <property type="RefSeq protein sequence ID" value="NP_001137434.1"/>
</dbReference>
<dbReference type="UCSC" id="uc031vow.1">
    <property type="organism name" value="human"/>
</dbReference>
<dbReference type="AGR" id="HGNC:1485"/>
<dbReference type="CTD" id="388743"/>
<dbReference type="DisGeNET" id="388743"/>
<dbReference type="GeneCards" id="CAPN8"/>
<dbReference type="HGNC" id="HGNC:1485">
    <property type="gene designation" value="CAPN8"/>
</dbReference>
<dbReference type="HPA" id="ENSG00000203697">
    <property type="expression patterns" value="Tissue enriched (stomach)"/>
</dbReference>
<dbReference type="MIM" id="618777">
    <property type="type" value="gene"/>
</dbReference>
<dbReference type="neXtProt" id="NX_A6NHC0"/>
<dbReference type="OpenTargets" id="ENSG00000203697"/>
<dbReference type="VEuPathDB" id="HostDB:ENSG00000203697"/>
<dbReference type="eggNOG" id="KOG0045">
    <property type="taxonomic scope" value="Eukaryota"/>
</dbReference>
<dbReference type="GeneTree" id="ENSGT00940000160090"/>
<dbReference type="HOGENOM" id="CLU_010982_0_1_1"/>
<dbReference type="InParanoid" id="A6NHC0"/>
<dbReference type="OMA" id="RMKGLFD"/>
<dbReference type="OrthoDB" id="424753at2759"/>
<dbReference type="PAN-GO" id="A6NHC0">
    <property type="GO annotations" value="3 GO annotations based on evolutionary models"/>
</dbReference>
<dbReference type="PhylomeDB" id="A6NHC0"/>
<dbReference type="TreeFam" id="TF314748"/>
<dbReference type="BRENDA" id="3.4.22.B28">
    <property type="organism ID" value="2681"/>
</dbReference>
<dbReference type="PathwayCommons" id="A6NHC0"/>
<dbReference type="Reactome" id="R-HSA-1474228">
    <property type="pathway name" value="Degradation of the extracellular matrix"/>
</dbReference>
<dbReference type="SignaLink" id="A6NHC0"/>
<dbReference type="BioGRID-ORCS" id="388743">
    <property type="hits" value="12 hits in 327 CRISPR screens"/>
</dbReference>
<dbReference type="ChiTaRS" id="CAPN8">
    <property type="organism name" value="human"/>
</dbReference>
<dbReference type="EvolutionaryTrace" id="A6NHC0"/>
<dbReference type="GenomeRNAi" id="388743"/>
<dbReference type="Pharos" id="A6NHC0">
    <property type="development level" value="Tbio"/>
</dbReference>
<dbReference type="PRO" id="PR:A6NHC0"/>
<dbReference type="Proteomes" id="UP000005640">
    <property type="component" value="Chromosome 1"/>
</dbReference>
<dbReference type="RNAct" id="A6NHC0">
    <property type="molecule type" value="protein"/>
</dbReference>
<dbReference type="Bgee" id="ENSG00000203697">
    <property type="expression patterns" value="Expressed in mucosa of transverse colon and 124 other cell types or tissues"/>
</dbReference>
<dbReference type="ExpressionAtlas" id="A6NHC0">
    <property type="expression patterns" value="baseline and differential"/>
</dbReference>
<dbReference type="GO" id="GO:0005737">
    <property type="term" value="C:cytoplasm"/>
    <property type="evidence" value="ECO:0000318"/>
    <property type="project" value="GO_Central"/>
</dbReference>
<dbReference type="GO" id="GO:0005794">
    <property type="term" value="C:Golgi apparatus"/>
    <property type="evidence" value="ECO:0007669"/>
    <property type="project" value="UniProtKB-SubCell"/>
</dbReference>
<dbReference type="GO" id="GO:0005509">
    <property type="term" value="F:calcium ion binding"/>
    <property type="evidence" value="ECO:0007669"/>
    <property type="project" value="InterPro"/>
</dbReference>
<dbReference type="GO" id="GO:0004198">
    <property type="term" value="F:calcium-dependent cysteine-type endopeptidase activity"/>
    <property type="evidence" value="ECO:0000318"/>
    <property type="project" value="GO_Central"/>
</dbReference>
<dbReference type="GO" id="GO:0006508">
    <property type="term" value="P:proteolysis"/>
    <property type="evidence" value="ECO:0000318"/>
    <property type="project" value="GO_Central"/>
</dbReference>
<dbReference type="CDD" id="cd00214">
    <property type="entry name" value="Calpain_III"/>
    <property type="match status" value="1"/>
</dbReference>
<dbReference type="CDD" id="cd00044">
    <property type="entry name" value="CysPc"/>
    <property type="match status" value="1"/>
</dbReference>
<dbReference type="CDD" id="cd16191">
    <property type="entry name" value="EFh_PEF_CAPN8"/>
    <property type="match status" value="1"/>
</dbReference>
<dbReference type="FunFam" id="2.60.120.380:FF:000001">
    <property type="entry name" value="Calpain-1 catalytic subunit"/>
    <property type="match status" value="1"/>
</dbReference>
<dbReference type="FunFam" id="3.90.70.10:FF:000001">
    <property type="entry name" value="Calpain-1 catalytic subunit"/>
    <property type="match status" value="1"/>
</dbReference>
<dbReference type="FunFam" id="1.10.238.10:FF:000099">
    <property type="entry name" value="calpain-2 catalytic subunit"/>
    <property type="match status" value="1"/>
</dbReference>
<dbReference type="Gene3D" id="2.60.120.380">
    <property type="match status" value="1"/>
</dbReference>
<dbReference type="Gene3D" id="3.90.70.10">
    <property type="entry name" value="Cysteine proteinases"/>
    <property type="match status" value="1"/>
</dbReference>
<dbReference type="Gene3D" id="1.10.238.10">
    <property type="entry name" value="EF-hand"/>
    <property type="match status" value="1"/>
</dbReference>
<dbReference type="InterPro" id="IPR033883">
    <property type="entry name" value="C2_III"/>
</dbReference>
<dbReference type="InterPro" id="IPR022684">
    <property type="entry name" value="Calpain_cysteine_protease"/>
</dbReference>
<dbReference type="InterPro" id="IPR022682">
    <property type="entry name" value="Calpain_domain_III"/>
</dbReference>
<dbReference type="InterPro" id="IPR022683">
    <property type="entry name" value="Calpain_III"/>
</dbReference>
<dbReference type="InterPro" id="IPR036213">
    <property type="entry name" value="Calpain_III_sf"/>
</dbReference>
<dbReference type="InterPro" id="IPR011992">
    <property type="entry name" value="EF-hand-dom_pair"/>
</dbReference>
<dbReference type="InterPro" id="IPR018247">
    <property type="entry name" value="EF_Hand_1_Ca_BS"/>
</dbReference>
<dbReference type="InterPro" id="IPR002048">
    <property type="entry name" value="EF_hand_dom"/>
</dbReference>
<dbReference type="InterPro" id="IPR038765">
    <property type="entry name" value="Papain-like_cys_pep_sf"/>
</dbReference>
<dbReference type="InterPro" id="IPR000169">
    <property type="entry name" value="Pept_cys_AS"/>
</dbReference>
<dbReference type="InterPro" id="IPR001300">
    <property type="entry name" value="Peptidase_C2_calpain_cat"/>
</dbReference>
<dbReference type="PANTHER" id="PTHR10183">
    <property type="entry name" value="CALPAIN"/>
    <property type="match status" value="1"/>
</dbReference>
<dbReference type="PANTHER" id="PTHR10183:SF374">
    <property type="entry name" value="CALPAIN-8"/>
    <property type="match status" value="1"/>
</dbReference>
<dbReference type="Pfam" id="PF01067">
    <property type="entry name" value="Calpain_III"/>
    <property type="match status" value="1"/>
</dbReference>
<dbReference type="Pfam" id="PF00648">
    <property type="entry name" value="Peptidase_C2"/>
    <property type="match status" value="1"/>
</dbReference>
<dbReference type="PRINTS" id="PR00704">
    <property type="entry name" value="CALPAIN"/>
</dbReference>
<dbReference type="SMART" id="SM00720">
    <property type="entry name" value="calpain_III"/>
    <property type="match status" value="1"/>
</dbReference>
<dbReference type="SMART" id="SM00230">
    <property type="entry name" value="CysPc"/>
    <property type="match status" value="1"/>
</dbReference>
<dbReference type="SUPFAM" id="SSF49758">
    <property type="entry name" value="Calpain large subunit, middle domain (domain III)"/>
    <property type="match status" value="1"/>
</dbReference>
<dbReference type="SUPFAM" id="SSF54001">
    <property type="entry name" value="Cysteine proteinases"/>
    <property type="match status" value="1"/>
</dbReference>
<dbReference type="SUPFAM" id="SSF47473">
    <property type="entry name" value="EF-hand"/>
    <property type="match status" value="1"/>
</dbReference>
<dbReference type="PROSITE" id="PS50203">
    <property type="entry name" value="CALPAIN_CAT"/>
    <property type="match status" value="1"/>
</dbReference>
<dbReference type="PROSITE" id="PS00018">
    <property type="entry name" value="EF_HAND_1"/>
    <property type="match status" value="2"/>
</dbReference>
<dbReference type="PROSITE" id="PS50222">
    <property type="entry name" value="EF_HAND_2"/>
    <property type="match status" value="3"/>
</dbReference>
<dbReference type="PROSITE" id="PS00139">
    <property type="entry name" value="THIOL_PROTEASE_CYS"/>
    <property type="match status" value="1"/>
</dbReference>
<gene>
    <name type="primary">CAPN8</name>
    <name type="synonym">NCL2</name>
</gene>
<accession>A6NHC0</accession>
<accession>B2RXL2</accession>
<keyword id="KW-0002">3D-structure</keyword>
<keyword id="KW-0068">Autocatalytic cleavage</keyword>
<keyword id="KW-0106">Calcium</keyword>
<keyword id="KW-0963">Cytoplasm</keyword>
<keyword id="KW-0333">Golgi apparatus</keyword>
<keyword id="KW-0378">Hydrolase</keyword>
<keyword id="KW-0479">Metal-binding</keyword>
<keyword id="KW-0645">Protease</keyword>
<keyword id="KW-1267">Proteomics identification</keyword>
<keyword id="KW-1185">Reference proteome</keyword>
<keyword id="KW-0677">Repeat</keyword>
<keyword id="KW-0788">Thiol protease</keyword>
<name>CAN8_HUMAN</name>
<reference key="1">
    <citation type="journal article" date="2001" name="J. Mol. Evol.">
        <title>Both the conserved and the unique gene structure of stomach-specific calpains reveal processes of calpain gene evolution.</title>
        <authorList>
            <person name="Hata S."/>
            <person name="Nishi K."/>
            <person name="Kawamoto T."/>
            <person name="Lee H.-J."/>
            <person name="Kawahara H."/>
            <person name="Maeda T."/>
            <person name="Shintani Y."/>
            <person name="Sorimachi H."/>
            <person name="Suzuki K."/>
        </authorList>
    </citation>
    <scope>NUCLEOTIDE SEQUENCE [MRNA]</scope>
    <source>
        <tissue>Leukocyte</tissue>
    </source>
</reference>
<reference key="2">
    <citation type="journal article" date="2006" name="Nature">
        <title>The DNA sequence and biological annotation of human chromosome 1.</title>
        <authorList>
            <person name="Gregory S.G."/>
            <person name="Barlow K.F."/>
            <person name="McLay K.E."/>
            <person name="Kaul R."/>
            <person name="Swarbreck D."/>
            <person name="Dunham A."/>
            <person name="Scott C.E."/>
            <person name="Howe K.L."/>
            <person name="Woodfine K."/>
            <person name="Spencer C.C.A."/>
            <person name="Jones M.C."/>
            <person name="Gillson C."/>
            <person name="Searle S."/>
            <person name="Zhou Y."/>
            <person name="Kokocinski F."/>
            <person name="McDonald L."/>
            <person name="Evans R."/>
            <person name="Phillips K."/>
            <person name="Atkinson A."/>
            <person name="Cooper R."/>
            <person name="Jones C."/>
            <person name="Hall R.E."/>
            <person name="Andrews T.D."/>
            <person name="Lloyd C."/>
            <person name="Ainscough R."/>
            <person name="Almeida J.P."/>
            <person name="Ambrose K.D."/>
            <person name="Anderson F."/>
            <person name="Andrew R.W."/>
            <person name="Ashwell R.I.S."/>
            <person name="Aubin K."/>
            <person name="Babbage A.K."/>
            <person name="Bagguley C.L."/>
            <person name="Bailey J."/>
            <person name="Beasley H."/>
            <person name="Bethel G."/>
            <person name="Bird C.P."/>
            <person name="Bray-Allen S."/>
            <person name="Brown J.Y."/>
            <person name="Brown A.J."/>
            <person name="Buckley D."/>
            <person name="Burton J."/>
            <person name="Bye J."/>
            <person name="Carder C."/>
            <person name="Chapman J.C."/>
            <person name="Clark S.Y."/>
            <person name="Clarke G."/>
            <person name="Clee C."/>
            <person name="Cobley V."/>
            <person name="Collier R.E."/>
            <person name="Corby N."/>
            <person name="Coville G.J."/>
            <person name="Davies J."/>
            <person name="Deadman R."/>
            <person name="Dunn M."/>
            <person name="Earthrowl M."/>
            <person name="Ellington A.G."/>
            <person name="Errington H."/>
            <person name="Frankish A."/>
            <person name="Frankland J."/>
            <person name="French L."/>
            <person name="Garner P."/>
            <person name="Garnett J."/>
            <person name="Gay L."/>
            <person name="Ghori M.R.J."/>
            <person name="Gibson R."/>
            <person name="Gilby L.M."/>
            <person name="Gillett W."/>
            <person name="Glithero R.J."/>
            <person name="Grafham D.V."/>
            <person name="Griffiths C."/>
            <person name="Griffiths-Jones S."/>
            <person name="Grocock R."/>
            <person name="Hammond S."/>
            <person name="Harrison E.S.I."/>
            <person name="Hart E."/>
            <person name="Haugen E."/>
            <person name="Heath P.D."/>
            <person name="Holmes S."/>
            <person name="Holt K."/>
            <person name="Howden P.J."/>
            <person name="Hunt A.R."/>
            <person name="Hunt S.E."/>
            <person name="Hunter G."/>
            <person name="Isherwood J."/>
            <person name="James R."/>
            <person name="Johnson C."/>
            <person name="Johnson D."/>
            <person name="Joy A."/>
            <person name="Kay M."/>
            <person name="Kershaw J.K."/>
            <person name="Kibukawa M."/>
            <person name="Kimberley A.M."/>
            <person name="King A."/>
            <person name="Knights A.J."/>
            <person name="Lad H."/>
            <person name="Laird G."/>
            <person name="Lawlor S."/>
            <person name="Leongamornlert D.A."/>
            <person name="Lloyd D.M."/>
            <person name="Loveland J."/>
            <person name="Lovell J."/>
            <person name="Lush M.J."/>
            <person name="Lyne R."/>
            <person name="Martin S."/>
            <person name="Mashreghi-Mohammadi M."/>
            <person name="Matthews L."/>
            <person name="Matthews N.S.W."/>
            <person name="McLaren S."/>
            <person name="Milne S."/>
            <person name="Mistry S."/>
            <person name="Moore M.J.F."/>
            <person name="Nickerson T."/>
            <person name="O'Dell C.N."/>
            <person name="Oliver K."/>
            <person name="Palmeiri A."/>
            <person name="Palmer S.A."/>
            <person name="Parker A."/>
            <person name="Patel D."/>
            <person name="Pearce A.V."/>
            <person name="Peck A.I."/>
            <person name="Pelan S."/>
            <person name="Phelps K."/>
            <person name="Phillimore B.J."/>
            <person name="Plumb R."/>
            <person name="Rajan J."/>
            <person name="Raymond C."/>
            <person name="Rouse G."/>
            <person name="Saenphimmachak C."/>
            <person name="Sehra H.K."/>
            <person name="Sheridan E."/>
            <person name="Shownkeen R."/>
            <person name="Sims S."/>
            <person name="Skuce C.D."/>
            <person name="Smith M."/>
            <person name="Steward C."/>
            <person name="Subramanian S."/>
            <person name="Sycamore N."/>
            <person name="Tracey A."/>
            <person name="Tromans A."/>
            <person name="Van Helmond Z."/>
            <person name="Wall M."/>
            <person name="Wallis J.M."/>
            <person name="White S."/>
            <person name="Whitehead S.L."/>
            <person name="Wilkinson J.E."/>
            <person name="Willey D.L."/>
            <person name="Williams H."/>
            <person name="Wilming L."/>
            <person name="Wray P.W."/>
            <person name="Wu Z."/>
            <person name="Coulson A."/>
            <person name="Vaudin M."/>
            <person name="Sulston J.E."/>
            <person name="Durbin R.M."/>
            <person name="Hubbard T."/>
            <person name="Wooster R."/>
            <person name="Dunham I."/>
            <person name="Carter N.P."/>
            <person name="McVean G."/>
            <person name="Ross M.T."/>
            <person name="Harrow J."/>
            <person name="Olson M.V."/>
            <person name="Beck S."/>
            <person name="Rogers J."/>
            <person name="Bentley D.R."/>
        </authorList>
    </citation>
    <scope>NUCLEOTIDE SEQUENCE [LARGE SCALE GENOMIC DNA]</scope>
</reference>
<reference key="3">
    <citation type="journal article" date="2004" name="Genome Res.">
        <title>The status, quality, and expansion of the NIH full-length cDNA project: the Mammalian Gene Collection (MGC).</title>
        <authorList>
            <consortium name="The MGC Project Team"/>
        </authorList>
    </citation>
    <scope>NUCLEOTIDE SEQUENCE [LARGE SCALE MRNA]</scope>
</reference>
<comment type="function">
    <text evidence="1">Calcium-regulated non-lysosomal thiol-protease. Involved in membrane trafficking in the gastric surface mucus cells (pit cells) and may involve the membrane trafficking of mucus cells via interactions with coat protein. Proteolytically cleaves the beta-subunit of coatomer complex (By similarity).</text>
</comment>
<comment type="catalytic activity">
    <reaction>
        <text>Broad endopeptidase specificity.</text>
        <dbReference type="EC" id="3.4.22.53"/>
    </reaction>
</comment>
<comment type="cofactor">
    <cofactor evidence="4">
        <name>Ca(2+)</name>
        <dbReference type="ChEBI" id="CHEBI:29108"/>
    </cofactor>
    <text evidence="4">Binds 2 calcium ions.</text>
</comment>
<comment type="subunit">
    <text evidence="1">Monomer and homooligomer. Interacts with COPS1/GPS1, COPB1, EYA2, NME2, NME4 and TOMM70 (By similarity).</text>
</comment>
<comment type="subcellular location">
    <subcellularLocation>
        <location evidence="1">Cytoplasm</location>
    </subcellularLocation>
    <subcellularLocation>
        <location evidence="1">Golgi apparatus</location>
    </subcellularLocation>
</comment>
<comment type="tissue specificity">
    <text>Stomach.</text>
</comment>
<comment type="domain">
    <text evidence="1">The domain III mediates oligomerization.</text>
</comment>
<comment type="PTM">
    <text evidence="1">Undergoes autolytic cleavage between Ala-5 and Ala-6 which gives rise to fragments extending from Ala-6 to the C-terminus, Ala-6 to the EF-hand 2 domain and from Ala-6 to the beginning of domain III.</text>
</comment>
<comment type="similarity">
    <text evidence="4">Belongs to the peptidase C2 family.</text>
</comment>
<sequence>MAAQAAGVSRQRAATQGLGSNQNALKYLGQDFKTLRQQCLDSGVLFKDPEFPACPSALGYKDLGPGSPQTQGIIWKRPTELCPSPQFIVGGATRTDICQGGLGDCWLLAAIASLTLNEELLYRVVPRDQDFQENYAGIFHFQFWQYGEWVEVVIDDRLPTKNGQLLFLHSEQGNEFWSALLEKAYAKLNGCYEALAGGSTVEGFEDFTGGISEFYDLKKPPANLYQIIRKALCAGSLLGCSIDVSSAAEAEAITSQKLVKSHAYSVTGVEEVNFQGHPEKLIRLRNPWGEVEWSGAWSDDAPEWNHIDPRRKEELDKKVEDGEFWMSLSDFVRQFSRLEICNLSPDSLSSEEVHKWNLVLFNGHWTRGSTAGGCQNYPATYWTNPQFKIRLDEVDEDQEESIGEPCCTVLLGLMQKNRRWRKRIGQGMLSIGYAVYQVPKELESHTDAHLGRDFFLAYQPSARTSTYVNLREVSGRARLPPGEYLVVPSTFEPFKDGEFCLRVFSEKKAQALEIGDVVAGNPYEPHPSEVDQEDDQFRRLFEKLAGKDSEITANALKILLNEAFSKRTDIKFDGFNINTCREMISLLDSNGTGTLGAVEFKTLWLKIQKYLEIYWETDYNHSGTIDAHEMRTALRKAGFTLNSQVQQTIALRYACSKLGINFDSFVACMIRLETLFKLFSLLDEDKDGMVQLSLAEWLCCVLV</sequence>
<proteinExistence type="evidence at protein level"/>
<protein>
    <recommendedName>
        <fullName>Calpain-8</fullName>
        <ecNumber>3.4.22.53</ecNumber>
    </recommendedName>
    <alternativeName>
        <fullName>New calpain 2</fullName>
        <shortName>nCL-2</shortName>
    </alternativeName>
    <alternativeName>
        <fullName>Stomach-specific M-type calpain</fullName>
    </alternativeName>
</protein>
<evidence type="ECO:0000250" key="1"/>
<evidence type="ECO:0000255" key="2">
    <source>
        <dbReference type="PROSITE-ProRule" id="PRU00239"/>
    </source>
</evidence>
<evidence type="ECO:0000255" key="3">
    <source>
        <dbReference type="PROSITE-ProRule" id="PRU00448"/>
    </source>
</evidence>
<evidence type="ECO:0000305" key="4"/>
<evidence type="ECO:0007829" key="5">
    <source>
        <dbReference type="PDB" id="2NQA"/>
    </source>
</evidence>
<organism>
    <name type="scientific">Homo sapiens</name>
    <name type="common">Human</name>
    <dbReference type="NCBI Taxonomy" id="9606"/>
    <lineage>
        <taxon>Eukaryota</taxon>
        <taxon>Metazoa</taxon>
        <taxon>Chordata</taxon>
        <taxon>Craniata</taxon>
        <taxon>Vertebrata</taxon>
        <taxon>Euteleostomi</taxon>
        <taxon>Mammalia</taxon>
        <taxon>Eutheria</taxon>
        <taxon>Euarchontoglires</taxon>
        <taxon>Primates</taxon>
        <taxon>Haplorrhini</taxon>
        <taxon>Catarrhini</taxon>
        <taxon>Hominidae</taxon>
        <taxon>Homo</taxon>
    </lineage>
</organism>